<accession>Q7UMC0</accession>
<evidence type="ECO:0000255" key="1">
    <source>
        <dbReference type="HAMAP-Rule" id="MF_00049"/>
    </source>
</evidence>
<dbReference type="EC" id="6.1.1.4" evidence="1"/>
<dbReference type="EMBL" id="BX294148">
    <property type="protein sequence ID" value="CAD75997.1"/>
    <property type="molecule type" value="Genomic_DNA"/>
</dbReference>
<dbReference type="RefSeq" id="NP_868620.1">
    <property type="nucleotide sequence ID" value="NC_005027.1"/>
</dbReference>
<dbReference type="RefSeq" id="WP_011122073.1">
    <property type="nucleotide sequence ID" value="NC_005027.1"/>
</dbReference>
<dbReference type="SMR" id="Q7UMC0"/>
<dbReference type="FunCoup" id="Q7UMC0">
    <property type="interactions" value="541"/>
</dbReference>
<dbReference type="STRING" id="243090.RB8919"/>
<dbReference type="EnsemblBacteria" id="CAD75997">
    <property type="protein sequence ID" value="CAD75997"/>
    <property type="gene ID" value="RB8919"/>
</dbReference>
<dbReference type="KEGG" id="rba:RB8919"/>
<dbReference type="PATRIC" id="fig|243090.15.peg.4279"/>
<dbReference type="eggNOG" id="COG0495">
    <property type="taxonomic scope" value="Bacteria"/>
</dbReference>
<dbReference type="HOGENOM" id="CLU_004427_0_0_0"/>
<dbReference type="InParanoid" id="Q7UMC0"/>
<dbReference type="OrthoDB" id="9810365at2"/>
<dbReference type="Proteomes" id="UP000001025">
    <property type="component" value="Chromosome"/>
</dbReference>
<dbReference type="GO" id="GO:0005829">
    <property type="term" value="C:cytosol"/>
    <property type="evidence" value="ECO:0000318"/>
    <property type="project" value="GO_Central"/>
</dbReference>
<dbReference type="GO" id="GO:0002161">
    <property type="term" value="F:aminoacyl-tRNA deacylase activity"/>
    <property type="evidence" value="ECO:0007669"/>
    <property type="project" value="InterPro"/>
</dbReference>
<dbReference type="GO" id="GO:0005524">
    <property type="term" value="F:ATP binding"/>
    <property type="evidence" value="ECO:0007669"/>
    <property type="project" value="UniProtKB-UniRule"/>
</dbReference>
<dbReference type="GO" id="GO:0004823">
    <property type="term" value="F:leucine-tRNA ligase activity"/>
    <property type="evidence" value="ECO:0000318"/>
    <property type="project" value="GO_Central"/>
</dbReference>
<dbReference type="GO" id="GO:0006429">
    <property type="term" value="P:leucyl-tRNA aminoacylation"/>
    <property type="evidence" value="ECO:0000318"/>
    <property type="project" value="GO_Central"/>
</dbReference>
<dbReference type="CDD" id="cd07958">
    <property type="entry name" value="Anticodon_Ia_Leu_BEm"/>
    <property type="match status" value="1"/>
</dbReference>
<dbReference type="FunFam" id="1.10.730.10:FF:000012">
    <property type="entry name" value="Leucine--tRNA ligase"/>
    <property type="match status" value="1"/>
</dbReference>
<dbReference type="FunFam" id="3.40.50.620:FF:000056">
    <property type="entry name" value="Leucine--tRNA ligase"/>
    <property type="match status" value="1"/>
</dbReference>
<dbReference type="FunFam" id="3.40.50.620:FF:000060">
    <property type="entry name" value="Leucine--tRNA ligase"/>
    <property type="match status" value="1"/>
</dbReference>
<dbReference type="FunFam" id="3.90.740.10:FF:000048">
    <property type="entry name" value="Leucine--tRNA ligase"/>
    <property type="match status" value="1"/>
</dbReference>
<dbReference type="FunFam" id="1.10.730.10:FF:000011">
    <property type="entry name" value="Leucine--tRNA ligase chloroplastic/mitochondrial"/>
    <property type="match status" value="1"/>
</dbReference>
<dbReference type="Gene3D" id="3.40.50.620">
    <property type="entry name" value="HUPs"/>
    <property type="match status" value="3"/>
</dbReference>
<dbReference type="Gene3D" id="1.10.730.10">
    <property type="entry name" value="Isoleucyl-tRNA Synthetase, Domain 1"/>
    <property type="match status" value="1"/>
</dbReference>
<dbReference type="Gene3D" id="3.90.740.10">
    <property type="entry name" value="Valyl/Leucyl/Isoleucyl-tRNA synthetase, editing domain"/>
    <property type="match status" value="1"/>
</dbReference>
<dbReference type="HAMAP" id="MF_00049_B">
    <property type="entry name" value="Leu_tRNA_synth_B"/>
    <property type="match status" value="1"/>
</dbReference>
<dbReference type="InterPro" id="IPR001412">
    <property type="entry name" value="aa-tRNA-synth_I_CS"/>
</dbReference>
<dbReference type="InterPro" id="IPR002300">
    <property type="entry name" value="aa-tRNA-synth_Ia"/>
</dbReference>
<dbReference type="InterPro" id="IPR002302">
    <property type="entry name" value="Leu-tRNA-ligase"/>
</dbReference>
<dbReference type="InterPro" id="IPR025709">
    <property type="entry name" value="Leu_tRNA-synth_edit"/>
</dbReference>
<dbReference type="InterPro" id="IPR013155">
    <property type="entry name" value="M/V/L/I-tRNA-synth_anticd-bd"/>
</dbReference>
<dbReference type="InterPro" id="IPR014729">
    <property type="entry name" value="Rossmann-like_a/b/a_fold"/>
</dbReference>
<dbReference type="InterPro" id="IPR009080">
    <property type="entry name" value="tRNAsynth_Ia_anticodon-bd"/>
</dbReference>
<dbReference type="InterPro" id="IPR009008">
    <property type="entry name" value="Val/Leu/Ile-tRNA-synth_edit"/>
</dbReference>
<dbReference type="NCBIfam" id="TIGR00396">
    <property type="entry name" value="leuS_bact"/>
    <property type="match status" value="1"/>
</dbReference>
<dbReference type="PANTHER" id="PTHR43740:SF2">
    <property type="entry name" value="LEUCINE--TRNA LIGASE, MITOCHONDRIAL"/>
    <property type="match status" value="1"/>
</dbReference>
<dbReference type="PANTHER" id="PTHR43740">
    <property type="entry name" value="LEUCYL-TRNA SYNTHETASE"/>
    <property type="match status" value="1"/>
</dbReference>
<dbReference type="Pfam" id="PF08264">
    <property type="entry name" value="Anticodon_1"/>
    <property type="match status" value="1"/>
</dbReference>
<dbReference type="Pfam" id="PF00133">
    <property type="entry name" value="tRNA-synt_1"/>
    <property type="match status" value="2"/>
</dbReference>
<dbReference type="Pfam" id="PF13603">
    <property type="entry name" value="tRNA-synt_1_2"/>
    <property type="match status" value="1"/>
</dbReference>
<dbReference type="PRINTS" id="PR00985">
    <property type="entry name" value="TRNASYNTHLEU"/>
</dbReference>
<dbReference type="SUPFAM" id="SSF47323">
    <property type="entry name" value="Anticodon-binding domain of a subclass of class I aminoacyl-tRNA synthetases"/>
    <property type="match status" value="1"/>
</dbReference>
<dbReference type="SUPFAM" id="SSF52374">
    <property type="entry name" value="Nucleotidylyl transferase"/>
    <property type="match status" value="1"/>
</dbReference>
<dbReference type="SUPFAM" id="SSF50677">
    <property type="entry name" value="ValRS/IleRS/LeuRS editing domain"/>
    <property type="match status" value="1"/>
</dbReference>
<dbReference type="PROSITE" id="PS00178">
    <property type="entry name" value="AA_TRNA_LIGASE_I"/>
    <property type="match status" value="1"/>
</dbReference>
<organism>
    <name type="scientific">Rhodopirellula baltica (strain DSM 10527 / NCIMB 13988 / SH1)</name>
    <dbReference type="NCBI Taxonomy" id="243090"/>
    <lineage>
        <taxon>Bacteria</taxon>
        <taxon>Pseudomonadati</taxon>
        <taxon>Planctomycetota</taxon>
        <taxon>Planctomycetia</taxon>
        <taxon>Pirellulales</taxon>
        <taxon>Pirellulaceae</taxon>
        <taxon>Rhodopirellula</taxon>
    </lineage>
</organism>
<reference key="1">
    <citation type="journal article" date="2003" name="Proc. Natl. Acad. Sci. U.S.A.">
        <title>Complete genome sequence of the marine planctomycete Pirellula sp. strain 1.</title>
        <authorList>
            <person name="Gloeckner F.O."/>
            <person name="Kube M."/>
            <person name="Bauer M."/>
            <person name="Teeling H."/>
            <person name="Lombardot T."/>
            <person name="Ludwig W."/>
            <person name="Gade D."/>
            <person name="Beck A."/>
            <person name="Borzym K."/>
            <person name="Heitmann K."/>
            <person name="Rabus R."/>
            <person name="Schlesner H."/>
            <person name="Amann R."/>
            <person name="Reinhardt R."/>
        </authorList>
    </citation>
    <scope>NUCLEOTIDE SEQUENCE [LARGE SCALE GENOMIC DNA]</scope>
    <source>
        <strain>DSM 10527 / NCIMB 13988 / SH1</strain>
    </source>
</reference>
<keyword id="KW-0030">Aminoacyl-tRNA synthetase</keyword>
<keyword id="KW-0067">ATP-binding</keyword>
<keyword id="KW-0963">Cytoplasm</keyword>
<keyword id="KW-0436">Ligase</keyword>
<keyword id="KW-0547">Nucleotide-binding</keyword>
<keyword id="KW-0648">Protein biosynthesis</keyword>
<keyword id="KW-1185">Reference proteome</keyword>
<sequence length="950" mass="107071">MVRYNPNEIEPRWQAYWDEHHTFATPEKVGKKKRYVLDMFPYPSGDGLHVGHPEGYTATDIVSRFARARGESVLHPMGFDAFGLPAEEHAIKTGEHPRVQTQRNIDNFTRQLKMLGFSYDWDRVLATTDEEYFRWTQWIFGVLYDTWFDHDQQKGRPISELPIPAEVTAEGELEIEQYRDSKRLAYLDDALVNWCPKLGTVLANEEVVDGKSEVGGHPVKRIPLRQWMLRITDYAERLLDGLDDLDWPTGIKKLQSDWIGRSTGGEVDFYLQRGAAGDDTGPFVAFKRARESEGFPTDPGKDCLRVYTTRPDTLFGATYMVVAPEHPLIDVLVKPEQKDEVDAYREKASFKSDRERTDGDRAKTGVFTGSYAINPADGRSIPIWVADYVLAGYGTGAIMAVPAHDERDFEFAVAFDLPVIPVVDPPADHKQREEILAGKACFAAEGVAINSGEYDGKTTAEVKAALTAELAKQGLACEAVNYKLRDWLFSRQRFWGEPFPVLHEIDSEGNATGVRRLVPDDQLPVTLPELADFKPHGRPEPPLAKADDDWLIVELDGKRYRRETNTMPQWAGSCWYYLRYIDPKNSDALIDPQKEKDWMPVDLYVGGAEHAVLHLLYSRFWHKVLFDRGHVTCPEPFGKLVNQGMILGEVEFTSFVDPSGKHVSTKDVKKDAEGNRVHKATGEQVEIVSLTEEQVVKKGEGFVLASDASIKVDSRAFKMSKSRGNVVNPDSVVRDYGADSLRLYEMFMGPLEATKPWAMNGVGGVRSFLDRVWRMIIDEPEDELKVSDAVVDTACDEEQLRVLHQTIRKVTEDNEAMSFNTAIAKMMEFTNHFTRCETRPREAMESFLILLAPYAPHMCEELWKHLGHNESISLQPWPKWDEAALVQSSIEIPVQINGKVKAKISLSPDAKPNEMGEAALADPAVQNAIGDKKVVKTIAVPGRMVNLVVK</sequence>
<comment type="catalytic activity">
    <reaction evidence="1">
        <text>tRNA(Leu) + L-leucine + ATP = L-leucyl-tRNA(Leu) + AMP + diphosphate</text>
        <dbReference type="Rhea" id="RHEA:11688"/>
        <dbReference type="Rhea" id="RHEA-COMP:9613"/>
        <dbReference type="Rhea" id="RHEA-COMP:9622"/>
        <dbReference type="ChEBI" id="CHEBI:30616"/>
        <dbReference type="ChEBI" id="CHEBI:33019"/>
        <dbReference type="ChEBI" id="CHEBI:57427"/>
        <dbReference type="ChEBI" id="CHEBI:78442"/>
        <dbReference type="ChEBI" id="CHEBI:78494"/>
        <dbReference type="ChEBI" id="CHEBI:456215"/>
        <dbReference type="EC" id="6.1.1.4"/>
    </reaction>
</comment>
<comment type="subcellular location">
    <subcellularLocation>
        <location evidence="1">Cytoplasm</location>
    </subcellularLocation>
</comment>
<comment type="similarity">
    <text evidence="1">Belongs to the class-I aminoacyl-tRNA synthetase family.</text>
</comment>
<name>SYL_RHOBA</name>
<proteinExistence type="inferred from homology"/>
<protein>
    <recommendedName>
        <fullName evidence="1">Leucine--tRNA ligase</fullName>
        <ecNumber evidence="1">6.1.1.4</ecNumber>
    </recommendedName>
    <alternativeName>
        <fullName evidence="1">Leucyl-tRNA synthetase</fullName>
        <shortName evidence="1">LeuRS</shortName>
    </alternativeName>
</protein>
<feature type="chain" id="PRO_0000152072" description="Leucine--tRNA ligase">
    <location>
        <begin position="1"/>
        <end position="950"/>
    </location>
</feature>
<feature type="short sequence motif" description="'HIGH' region">
    <location>
        <begin position="41"/>
        <end position="52"/>
    </location>
</feature>
<feature type="short sequence motif" description="'KMSKS' region">
    <location>
        <begin position="718"/>
        <end position="722"/>
    </location>
</feature>
<feature type="binding site" evidence="1">
    <location>
        <position position="721"/>
    </location>
    <ligand>
        <name>ATP</name>
        <dbReference type="ChEBI" id="CHEBI:30616"/>
    </ligand>
</feature>
<gene>
    <name evidence="1" type="primary">leuS</name>
    <name type="ordered locus">RB8919</name>
</gene>